<reference key="1">
    <citation type="journal article" date="1992" name="J. Gen. Virol.">
        <title>Complete sequence of maize stripe virus RNA4 and mapping of its subgenomic RNAs.</title>
        <authorList>
            <person name="Huiet L."/>
            <person name="Tsai J.H."/>
            <person name="Falk B.W."/>
        </authorList>
    </citation>
    <scope>NUCLEOTIDE SEQUENCE [GENOMIC RNA]</scope>
</reference>
<reference key="2">
    <citation type="journal article" date="1992" name="J. Gen. Virol.">
        <authorList>
            <person name="Huiet L."/>
            <person name="Tsai J.H."/>
            <person name="Falk B.W."/>
        </authorList>
    </citation>
    <scope>ERRATUM OF PUBMED:1629690</scope>
</reference>
<keyword id="KW-0694">RNA-binding</keyword>
<keyword id="KW-0813">Transport</keyword>
<keyword id="KW-0916">Viral movement protein</keyword>
<gene>
    <name type="ORF">pc4</name>
</gene>
<name>MVP_MSTV</name>
<comment type="function">
    <text evidence="1">Transports viral genome to neighboring plant cells directly through plasmosdesmata, without any budding. The movement protein allows efficient cell to cell propagation, by bypassing the host cell wall barrier (By similarity).</text>
</comment>
<comment type="similarity">
    <text evidence="2">Belongs to the tenuiviruses pc4 protein family.</text>
</comment>
<organism>
    <name type="scientific">Maize stripe virus</name>
    <name type="common">MStV</name>
    <dbReference type="NCBI Taxonomy" id="3052767"/>
    <lineage>
        <taxon>Viruses</taxon>
        <taxon>Riboviria</taxon>
        <taxon>Orthornavirae</taxon>
        <taxon>Negarnaviricota</taxon>
        <taxon>Polyploviricotina</taxon>
        <taxon>Ellioviricetes</taxon>
        <taxon>Bunyavirales</taxon>
        <taxon>Phenuiviridae</taxon>
        <taxon>Tenuivirus</taxon>
    </lineage>
</organism>
<feature type="chain" id="PRO_0000222530" description="Movement protein">
    <location>
        <begin position="1"/>
        <end position="283"/>
    </location>
</feature>
<protein>
    <recommendedName>
        <fullName>Movement protein</fullName>
    </recommendedName>
    <alternativeName>
        <fullName>Non-structural protein 4</fullName>
        <shortName>NS4</shortName>
    </alternativeName>
    <alternativeName>
        <fullName>Protein pc4</fullName>
    </alternativeName>
</protein>
<evidence type="ECO:0000250" key="1"/>
<evidence type="ECO:0000305" key="2"/>
<dbReference type="EMBL" id="S40180">
    <property type="protein sequence ID" value="AAB22542.2"/>
    <property type="molecule type" value="Genomic_RNA"/>
</dbReference>
<dbReference type="PIR" id="JQ1637">
    <property type="entry name" value="JQ1637"/>
</dbReference>
<dbReference type="OrthoDB" id="6428at10239"/>
<dbReference type="Proteomes" id="UP000234995">
    <property type="component" value="Genome"/>
</dbReference>
<dbReference type="GO" id="GO:0003723">
    <property type="term" value="F:RNA binding"/>
    <property type="evidence" value="ECO:0007669"/>
    <property type="project" value="UniProtKB-KW"/>
</dbReference>
<dbReference type="GO" id="GO:0046740">
    <property type="term" value="P:transport of virus in host, cell to cell"/>
    <property type="evidence" value="ECO:0007669"/>
    <property type="project" value="UniProtKB-KW"/>
</dbReference>
<dbReference type="InterPro" id="IPR004980">
    <property type="entry name" value="Tenui_NS4"/>
</dbReference>
<dbReference type="Pfam" id="PF03300">
    <property type="entry name" value="Tenui_NS4"/>
    <property type="match status" value="1"/>
</dbReference>
<proteinExistence type="inferred from homology"/>
<accession>P33521</accession>
<organismHost>
    <name type="scientific">Rottboellia</name>
    <dbReference type="NCBI Taxonomy" id="300124"/>
</organismHost>
<organismHost>
    <name type="scientific">Sorghum bicolor</name>
    <name type="common">Sorghum</name>
    <name type="synonym">Sorghum vulgare</name>
    <dbReference type="NCBI Taxonomy" id="4558"/>
</organismHost>
<organismHost>
    <name type="scientific">Zea mays</name>
    <name type="common">Maize</name>
    <dbReference type="NCBI Taxonomy" id="4577"/>
</organismHost>
<sequence length="283" mass="31924">MALMKLFSRSNGKVLVDDLSEEGQKRLDLANNKKKLLSARPLTKGRMSIDQAATVLGLEPFSFADIKVNKYDMFTAKQDYSIKANRVATFCIAVDPFWFHKPLTYYPFFRIATFAMVWIGVKGRAAGTTTLKIIDKSYVDPQDQVEVEVTYPICKNFAVLGSLPNFLALEDKTNLRVSVSIQGATVQNCVISRALWFWGIERTDLPVSMKTTDTVMFEFEPLEDFNVNHLSSFSKFTTNVVQKAVGGAFVTKSFPELDSQKEFGVVKQPKKIPIMKPKRSIFD</sequence>